<reference key="1">
    <citation type="submission" date="2001-08" db="EMBL/GenBank/DDBJ databases">
        <title>SCR of Salmonella typhimurium is a copper-responsive MerR family transcriptional regulator of CuiD.</title>
        <authorList>
            <person name="Choi S.-Y."/>
            <person name="Lee I."/>
            <person name="Kim J."/>
        </authorList>
    </citation>
    <scope>NUCLEOTIDE SEQUENCE [GENOMIC DNA]</scope>
</reference>
<reference key="2">
    <citation type="journal article" date="2001" name="Nature">
        <title>Complete genome sequence of Salmonella enterica serovar Typhimurium LT2.</title>
        <authorList>
            <person name="McClelland M."/>
            <person name="Sanderson K.E."/>
            <person name="Spieth J."/>
            <person name="Clifton S.W."/>
            <person name="Latreille P."/>
            <person name="Courtney L."/>
            <person name="Porwollik S."/>
            <person name="Ali J."/>
            <person name="Dante M."/>
            <person name="Du F."/>
            <person name="Hou S."/>
            <person name="Layman D."/>
            <person name="Leonard S."/>
            <person name="Nguyen C."/>
            <person name="Scott K."/>
            <person name="Holmes A."/>
            <person name="Grewal N."/>
            <person name="Mulvaney E."/>
            <person name="Ryan E."/>
            <person name="Sun H."/>
            <person name="Florea L."/>
            <person name="Miller W."/>
            <person name="Stoneking T."/>
            <person name="Nhan M."/>
            <person name="Waterston R."/>
            <person name="Wilson R.K."/>
        </authorList>
    </citation>
    <scope>NUCLEOTIDE SEQUENCE [LARGE SCALE GENOMIC DNA]</scope>
    <source>
        <strain>LT2 / SGSC1412 / ATCC 700720</strain>
    </source>
</reference>
<reference key="3">
    <citation type="journal article" date="2007" name="Microbiology">
        <title>Dissecting the Salmonella response to copper.</title>
        <authorList>
            <person name="Espariz M."/>
            <person name="Checa S.K."/>
            <person name="Perez Audero M.E."/>
            <person name="Pontel L.B."/>
            <person name="Soncini F.C."/>
        </authorList>
    </citation>
    <scope>FUNCTION IN COPPER TOLERANCE</scope>
    <scope>DISRUPTION PHENOTYPE</scope>
    <scope>DNA-BINDING</scope>
    <source>
        <strain>ATCC 14028s / SGSG 2262</strain>
    </source>
</reference>
<comment type="function">
    <text evidence="3">Regulates the transcription of the copA and cuiD (cueO) genes. Detects cytoplasmic copper stress and activates transcription in response to increasing copper concentrations (PubMed:17768242).</text>
</comment>
<comment type="subunit">
    <text evidence="1">Homodimer.</text>
</comment>
<comment type="subcellular location">
    <subcellularLocation>
        <location evidence="4">Cytoplasm</location>
    </subcellularLocation>
</comment>
<comment type="domain">
    <text evidence="1">It contains a N-terminal DNA binding region and a C-terminal metal binding region.</text>
</comment>
<comment type="disruption phenotype">
    <text evidence="3">Loss of copper-based induction of copA. Causes a mild defect in aerobic growth on CuSO(4), strongly impairs survival during anaerobic growth on CuSO(4).</text>
</comment>
<sequence>MNISDVAKKTGLTSKAIRFYEEKGLVTPPLRSENGYRTYTQKHLNELTLLRQARQVGFNLEECGELVNLFNDPRRHSADVKKRTLEKVAEIERHISELQSMRDQLLALAESCPGDDSADCPIIDNLSGCCHHKAQKPR</sequence>
<dbReference type="EMBL" id="AF409088">
    <property type="protein sequence ID" value="AAL11724.1"/>
    <property type="molecule type" value="Genomic_DNA"/>
</dbReference>
<dbReference type="EMBL" id="AE006468">
    <property type="protein sequence ID" value="AAL19453.1"/>
    <property type="molecule type" value="Genomic_DNA"/>
</dbReference>
<dbReference type="RefSeq" id="NP_459494.1">
    <property type="nucleotide sequence ID" value="NC_003197.2"/>
</dbReference>
<dbReference type="RefSeq" id="WP_001026760.1">
    <property type="nucleotide sequence ID" value="NC_003197.2"/>
</dbReference>
<dbReference type="SMR" id="Q93CH6"/>
<dbReference type="STRING" id="99287.STM0499"/>
<dbReference type="PaxDb" id="99287-STM0499"/>
<dbReference type="GeneID" id="1252019"/>
<dbReference type="KEGG" id="stm:STM0499"/>
<dbReference type="PATRIC" id="fig|99287.12.peg.533"/>
<dbReference type="HOGENOM" id="CLU_060077_2_0_6"/>
<dbReference type="OMA" id="DAGSECC"/>
<dbReference type="PhylomeDB" id="Q93CH6"/>
<dbReference type="BioCyc" id="SENT99287:STM0499-MONOMER"/>
<dbReference type="Proteomes" id="UP000001014">
    <property type="component" value="Chromosome"/>
</dbReference>
<dbReference type="GO" id="GO:0005737">
    <property type="term" value="C:cytoplasm"/>
    <property type="evidence" value="ECO:0007669"/>
    <property type="project" value="UniProtKB-SubCell"/>
</dbReference>
<dbReference type="GO" id="GO:0005507">
    <property type="term" value="F:copper ion binding"/>
    <property type="evidence" value="ECO:0007669"/>
    <property type="project" value="InterPro"/>
</dbReference>
<dbReference type="GO" id="GO:0003677">
    <property type="term" value="F:DNA binding"/>
    <property type="evidence" value="ECO:0007669"/>
    <property type="project" value="UniProtKB-KW"/>
</dbReference>
<dbReference type="GO" id="GO:0003700">
    <property type="term" value="F:DNA-binding transcription factor activity"/>
    <property type="evidence" value="ECO:0000318"/>
    <property type="project" value="GO_Central"/>
</dbReference>
<dbReference type="GO" id="GO:0045893">
    <property type="term" value="P:positive regulation of DNA-templated transcription"/>
    <property type="evidence" value="ECO:0000318"/>
    <property type="project" value="GO_Central"/>
</dbReference>
<dbReference type="CDD" id="cd01108">
    <property type="entry name" value="HTH_CueR"/>
    <property type="match status" value="1"/>
</dbReference>
<dbReference type="FunFam" id="1.10.1660.10:FF:000001">
    <property type="entry name" value="Cu(I)-responsive transcriptional regulator"/>
    <property type="match status" value="1"/>
</dbReference>
<dbReference type="Gene3D" id="1.10.1660.10">
    <property type="match status" value="1"/>
</dbReference>
<dbReference type="InterPro" id="IPR011789">
    <property type="entry name" value="CueR"/>
</dbReference>
<dbReference type="InterPro" id="IPR009061">
    <property type="entry name" value="DNA-bd_dom_put_sf"/>
</dbReference>
<dbReference type="InterPro" id="IPR000551">
    <property type="entry name" value="MerR-type_HTH_dom"/>
</dbReference>
<dbReference type="InterPro" id="IPR047057">
    <property type="entry name" value="MerR_fam"/>
</dbReference>
<dbReference type="NCBIfam" id="TIGR02044">
    <property type="entry name" value="CueR"/>
    <property type="match status" value="1"/>
</dbReference>
<dbReference type="NCBIfam" id="NF007590">
    <property type="entry name" value="PRK10227.1"/>
    <property type="match status" value="1"/>
</dbReference>
<dbReference type="PANTHER" id="PTHR30204:SF16">
    <property type="entry name" value="HTH-TYPE TRANSCRIPTIONAL REGULATOR CUER"/>
    <property type="match status" value="1"/>
</dbReference>
<dbReference type="PANTHER" id="PTHR30204">
    <property type="entry name" value="REDOX-CYCLING DRUG-SENSING TRANSCRIPTIONAL ACTIVATOR SOXR"/>
    <property type="match status" value="1"/>
</dbReference>
<dbReference type="Pfam" id="PF13411">
    <property type="entry name" value="MerR_1"/>
    <property type="match status" value="1"/>
</dbReference>
<dbReference type="PRINTS" id="PR00040">
    <property type="entry name" value="HTHMERR"/>
</dbReference>
<dbReference type="SMART" id="SM00422">
    <property type="entry name" value="HTH_MERR"/>
    <property type="match status" value="1"/>
</dbReference>
<dbReference type="SUPFAM" id="SSF46955">
    <property type="entry name" value="Putative DNA-binding domain"/>
    <property type="match status" value="1"/>
</dbReference>
<dbReference type="PROSITE" id="PS00552">
    <property type="entry name" value="HTH_MERR_1"/>
    <property type="match status" value="1"/>
</dbReference>
<dbReference type="PROSITE" id="PS50937">
    <property type="entry name" value="HTH_MERR_2"/>
    <property type="match status" value="1"/>
</dbReference>
<gene>
    <name type="primary">cueR</name>
    <name type="synonym">scr</name>
    <name type="ordered locus">STM0499</name>
</gene>
<keyword id="KW-0010">Activator</keyword>
<keyword id="KW-0186">Copper</keyword>
<keyword id="KW-0963">Cytoplasm</keyword>
<keyword id="KW-0238">DNA-binding</keyword>
<keyword id="KW-0479">Metal-binding</keyword>
<keyword id="KW-1185">Reference proteome</keyword>
<keyword id="KW-0804">Transcription</keyword>
<keyword id="KW-0805">Transcription regulation</keyword>
<evidence type="ECO:0000250" key="1"/>
<evidence type="ECO:0000255" key="2">
    <source>
        <dbReference type="PROSITE-ProRule" id="PRU00254"/>
    </source>
</evidence>
<evidence type="ECO:0000269" key="3">
    <source>
    </source>
</evidence>
<evidence type="ECO:0000305" key="4"/>
<name>CUER_SALTY</name>
<feature type="chain" id="PRO_0000098115" description="HTH-type transcriptional regulator CueR">
    <location>
        <begin position="1"/>
        <end position="138"/>
    </location>
</feature>
<feature type="domain" description="HTH merR-type" evidence="2">
    <location>
        <begin position="1"/>
        <end position="69"/>
    </location>
</feature>
<feature type="DNA-binding region" description="H-T-H motif" evidence="2">
    <location>
        <begin position="4"/>
        <end position="23"/>
    </location>
</feature>
<feature type="binding site" evidence="1">
    <location>
        <position position="112"/>
    </location>
    <ligand>
        <name>Cu(+)</name>
        <dbReference type="ChEBI" id="CHEBI:49552"/>
    </ligand>
</feature>
<feature type="binding site" evidence="1">
    <location>
        <position position="120"/>
    </location>
    <ligand>
        <name>Cu(+)</name>
        <dbReference type="ChEBI" id="CHEBI:49552"/>
    </ligand>
</feature>
<proteinExistence type="evidence at protein level"/>
<protein>
    <recommendedName>
        <fullName>HTH-type transcriptional regulator CueR</fullName>
    </recommendedName>
    <alternativeName>
        <fullName>Copper efflux regulator</fullName>
    </alternativeName>
    <alternativeName>
        <fullName>Copper export regulator</fullName>
    </alternativeName>
</protein>
<accession>Q93CH6</accession>
<organism>
    <name type="scientific">Salmonella typhimurium (strain LT2 / SGSC1412 / ATCC 700720)</name>
    <dbReference type="NCBI Taxonomy" id="99287"/>
    <lineage>
        <taxon>Bacteria</taxon>
        <taxon>Pseudomonadati</taxon>
        <taxon>Pseudomonadota</taxon>
        <taxon>Gammaproteobacteria</taxon>
        <taxon>Enterobacterales</taxon>
        <taxon>Enterobacteriaceae</taxon>
        <taxon>Salmonella</taxon>
    </lineage>
</organism>